<dbReference type="EMBL" id="CP000949">
    <property type="protein sequence ID" value="ACA74786.1"/>
    <property type="molecule type" value="Genomic_DNA"/>
</dbReference>
<dbReference type="SMR" id="B1JBG6"/>
<dbReference type="STRING" id="390235.PputW619_4306"/>
<dbReference type="KEGG" id="ppw:PputW619_4306"/>
<dbReference type="eggNOG" id="COG4108">
    <property type="taxonomic scope" value="Bacteria"/>
</dbReference>
<dbReference type="HOGENOM" id="CLU_002794_2_1_6"/>
<dbReference type="OrthoDB" id="9801472at2"/>
<dbReference type="GO" id="GO:0005829">
    <property type="term" value="C:cytosol"/>
    <property type="evidence" value="ECO:0007669"/>
    <property type="project" value="TreeGrafter"/>
</dbReference>
<dbReference type="GO" id="GO:0005525">
    <property type="term" value="F:GTP binding"/>
    <property type="evidence" value="ECO:0007669"/>
    <property type="project" value="UniProtKB-UniRule"/>
</dbReference>
<dbReference type="GO" id="GO:0003924">
    <property type="term" value="F:GTPase activity"/>
    <property type="evidence" value="ECO:0007669"/>
    <property type="project" value="InterPro"/>
</dbReference>
<dbReference type="GO" id="GO:0097216">
    <property type="term" value="F:guanosine tetraphosphate binding"/>
    <property type="evidence" value="ECO:0007669"/>
    <property type="project" value="UniProtKB-ARBA"/>
</dbReference>
<dbReference type="GO" id="GO:0016150">
    <property type="term" value="F:translation release factor activity, codon nonspecific"/>
    <property type="evidence" value="ECO:0007669"/>
    <property type="project" value="TreeGrafter"/>
</dbReference>
<dbReference type="GO" id="GO:0016149">
    <property type="term" value="F:translation release factor activity, codon specific"/>
    <property type="evidence" value="ECO:0007669"/>
    <property type="project" value="UniProtKB-UniRule"/>
</dbReference>
<dbReference type="GO" id="GO:0006449">
    <property type="term" value="P:regulation of translational termination"/>
    <property type="evidence" value="ECO:0007669"/>
    <property type="project" value="UniProtKB-UniRule"/>
</dbReference>
<dbReference type="CDD" id="cd04169">
    <property type="entry name" value="RF3"/>
    <property type="match status" value="1"/>
</dbReference>
<dbReference type="CDD" id="cd03689">
    <property type="entry name" value="RF3_II"/>
    <property type="match status" value="1"/>
</dbReference>
<dbReference type="CDD" id="cd16259">
    <property type="entry name" value="RF3_III"/>
    <property type="match status" value="1"/>
</dbReference>
<dbReference type="FunFam" id="2.40.30.10:FF:000040">
    <property type="entry name" value="Peptide chain release factor 3"/>
    <property type="match status" value="1"/>
</dbReference>
<dbReference type="FunFam" id="3.30.70.3280:FF:000001">
    <property type="entry name" value="Peptide chain release factor 3"/>
    <property type="match status" value="1"/>
</dbReference>
<dbReference type="FunFam" id="3.40.50.300:FF:000542">
    <property type="entry name" value="Peptide chain release factor 3"/>
    <property type="match status" value="1"/>
</dbReference>
<dbReference type="Gene3D" id="3.40.50.300">
    <property type="entry name" value="P-loop containing nucleotide triphosphate hydrolases"/>
    <property type="match status" value="2"/>
</dbReference>
<dbReference type="Gene3D" id="3.30.70.3280">
    <property type="entry name" value="Peptide chain release factor 3, domain III"/>
    <property type="match status" value="1"/>
</dbReference>
<dbReference type="HAMAP" id="MF_00072">
    <property type="entry name" value="Rel_fac_3"/>
    <property type="match status" value="1"/>
</dbReference>
<dbReference type="InterPro" id="IPR053905">
    <property type="entry name" value="EF-G-like_DII"/>
</dbReference>
<dbReference type="InterPro" id="IPR035647">
    <property type="entry name" value="EFG_III/V"/>
</dbReference>
<dbReference type="InterPro" id="IPR031157">
    <property type="entry name" value="G_TR_CS"/>
</dbReference>
<dbReference type="InterPro" id="IPR027417">
    <property type="entry name" value="P-loop_NTPase"/>
</dbReference>
<dbReference type="InterPro" id="IPR004548">
    <property type="entry name" value="PrfC"/>
</dbReference>
<dbReference type="InterPro" id="IPR032090">
    <property type="entry name" value="RF3_C"/>
</dbReference>
<dbReference type="InterPro" id="IPR038467">
    <property type="entry name" value="RF3_dom_3_sf"/>
</dbReference>
<dbReference type="InterPro" id="IPR041732">
    <property type="entry name" value="RF3_GTP-bd"/>
</dbReference>
<dbReference type="InterPro" id="IPR005225">
    <property type="entry name" value="Small_GTP-bd"/>
</dbReference>
<dbReference type="InterPro" id="IPR000795">
    <property type="entry name" value="T_Tr_GTP-bd_dom"/>
</dbReference>
<dbReference type="InterPro" id="IPR009000">
    <property type="entry name" value="Transl_B-barrel_sf"/>
</dbReference>
<dbReference type="NCBIfam" id="TIGR00503">
    <property type="entry name" value="prfC"/>
    <property type="match status" value="1"/>
</dbReference>
<dbReference type="NCBIfam" id="NF001964">
    <property type="entry name" value="PRK00741.1"/>
    <property type="match status" value="1"/>
</dbReference>
<dbReference type="NCBIfam" id="TIGR00231">
    <property type="entry name" value="small_GTP"/>
    <property type="match status" value="1"/>
</dbReference>
<dbReference type="PANTHER" id="PTHR43556">
    <property type="entry name" value="PEPTIDE CHAIN RELEASE FACTOR RF3"/>
    <property type="match status" value="1"/>
</dbReference>
<dbReference type="PANTHER" id="PTHR43556:SF2">
    <property type="entry name" value="PEPTIDE CHAIN RELEASE FACTOR RF3"/>
    <property type="match status" value="1"/>
</dbReference>
<dbReference type="Pfam" id="PF22042">
    <property type="entry name" value="EF-G_D2"/>
    <property type="match status" value="1"/>
</dbReference>
<dbReference type="Pfam" id="PF00009">
    <property type="entry name" value="GTP_EFTU"/>
    <property type="match status" value="1"/>
</dbReference>
<dbReference type="Pfam" id="PF16658">
    <property type="entry name" value="RF3_C"/>
    <property type="match status" value="1"/>
</dbReference>
<dbReference type="PRINTS" id="PR00315">
    <property type="entry name" value="ELONGATNFCT"/>
</dbReference>
<dbReference type="SUPFAM" id="SSF54980">
    <property type="entry name" value="EF-G C-terminal domain-like"/>
    <property type="match status" value="1"/>
</dbReference>
<dbReference type="SUPFAM" id="SSF52540">
    <property type="entry name" value="P-loop containing nucleoside triphosphate hydrolases"/>
    <property type="match status" value="1"/>
</dbReference>
<dbReference type="SUPFAM" id="SSF50447">
    <property type="entry name" value="Translation proteins"/>
    <property type="match status" value="1"/>
</dbReference>
<dbReference type="PROSITE" id="PS00301">
    <property type="entry name" value="G_TR_1"/>
    <property type="match status" value="1"/>
</dbReference>
<dbReference type="PROSITE" id="PS51722">
    <property type="entry name" value="G_TR_2"/>
    <property type="match status" value="1"/>
</dbReference>
<accession>B1JBG6</accession>
<feature type="chain" id="PRO_1000092492" description="Peptide chain release factor 3">
    <location>
        <begin position="1"/>
        <end position="527"/>
    </location>
</feature>
<feature type="domain" description="tr-type G">
    <location>
        <begin position="9"/>
        <end position="277"/>
    </location>
</feature>
<feature type="binding site" evidence="1">
    <location>
        <begin position="18"/>
        <end position="25"/>
    </location>
    <ligand>
        <name>GTP</name>
        <dbReference type="ChEBI" id="CHEBI:37565"/>
    </ligand>
</feature>
<feature type="binding site" evidence="1">
    <location>
        <begin position="86"/>
        <end position="90"/>
    </location>
    <ligand>
        <name>GTP</name>
        <dbReference type="ChEBI" id="CHEBI:37565"/>
    </ligand>
</feature>
<feature type="binding site" evidence="1">
    <location>
        <begin position="140"/>
        <end position="143"/>
    </location>
    <ligand>
        <name>GTP</name>
        <dbReference type="ChEBI" id="CHEBI:37565"/>
    </ligand>
</feature>
<evidence type="ECO:0000255" key="1">
    <source>
        <dbReference type="HAMAP-Rule" id="MF_00072"/>
    </source>
</evidence>
<protein>
    <recommendedName>
        <fullName evidence="1">Peptide chain release factor 3</fullName>
        <shortName evidence="1">RF-3</shortName>
    </recommendedName>
</protein>
<sequence length="527" mass="59716">MTNQAAEVAKRRTFAIISHPDAGKTTITEKLLLMGKAIAVAGTVKSRKSDRHATSDWMEMEKQRGISITTSVMQFPYREHMINLLDTPGHEDFSEDTYRTLTAVDSALMVLDGGKGVEPRTIALMDVCRLRDTPIVSFINKLDRDIRDPIELLDEIEAVLKIKAAPITWPIGCYRDFKGVYHLAGDYIIVYTPGHGHERTEAKIIEKLDSDEARAHLGDEYDRFLEQLELVQGACHEFDQDEFINGQLTPVFFGTALGNFGVDHVLDAVVDWAPRPLARVAHERTVEPVEEKFTGFVFKIQANMDPKHRDRIAFMRICSGKYEKGMKMRHVRTGKDLRIGDALTFFSSEREQLEEAYAGDIIGLHNHGTIQIGDTFTEGEALGFTGIPHFAPELFRRVRLKDPLKSKQLRQGLQQLAEEGATQVFFPERSNDIILGAVGVLQFDVVASRLKEEYKVECAYEPITVWSARWISCDDKKKLEDFQVKAMENLAIDGGGHLTYLAPTRVNLSLMEERWPDVKFRATREHH</sequence>
<name>RF3_PSEPW</name>
<proteinExistence type="inferred from homology"/>
<gene>
    <name evidence="1" type="primary">prfC</name>
    <name type="ordered locus">PputW619_4306</name>
</gene>
<organism>
    <name type="scientific">Pseudomonas putida (strain W619)</name>
    <dbReference type="NCBI Taxonomy" id="390235"/>
    <lineage>
        <taxon>Bacteria</taxon>
        <taxon>Pseudomonadati</taxon>
        <taxon>Pseudomonadota</taxon>
        <taxon>Gammaproteobacteria</taxon>
        <taxon>Pseudomonadales</taxon>
        <taxon>Pseudomonadaceae</taxon>
        <taxon>Pseudomonas</taxon>
    </lineage>
</organism>
<keyword id="KW-0963">Cytoplasm</keyword>
<keyword id="KW-0342">GTP-binding</keyword>
<keyword id="KW-0547">Nucleotide-binding</keyword>
<keyword id="KW-0648">Protein biosynthesis</keyword>
<reference key="1">
    <citation type="submission" date="2008-02" db="EMBL/GenBank/DDBJ databases">
        <title>Complete sequence of Pseudomonas putida W619.</title>
        <authorList>
            <person name="Copeland A."/>
            <person name="Lucas S."/>
            <person name="Lapidus A."/>
            <person name="Barry K."/>
            <person name="Detter J.C."/>
            <person name="Glavina del Rio T."/>
            <person name="Dalin E."/>
            <person name="Tice H."/>
            <person name="Pitluck S."/>
            <person name="Chain P."/>
            <person name="Malfatti S."/>
            <person name="Shin M."/>
            <person name="Vergez L."/>
            <person name="Schmutz J."/>
            <person name="Larimer F."/>
            <person name="Land M."/>
            <person name="Hauser L."/>
            <person name="Kyrpides N."/>
            <person name="Kim E."/>
            <person name="Taghavi S."/>
            <person name="Vangronsveld D."/>
            <person name="van der Lelie D."/>
            <person name="Richardson P."/>
        </authorList>
    </citation>
    <scope>NUCLEOTIDE SEQUENCE [LARGE SCALE GENOMIC DNA]</scope>
    <source>
        <strain>W619</strain>
    </source>
</reference>
<comment type="function">
    <text evidence="1">Increases the formation of ribosomal termination complexes and stimulates activities of RF-1 and RF-2. It binds guanine nucleotides and has strong preference for UGA stop codons. It may interact directly with the ribosome. The stimulation of RF-1 and RF-2 is significantly reduced by GTP and GDP, but not by GMP.</text>
</comment>
<comment type="subcellular location">
    <subcellularLocation>
        <location evidence="1">Cytoplasm</location>
    </subcellularLocation>
</comment>
<comment type="similarity">
    <text evidence="1">Belongs to the TRAFAC class translation factor GTPase superfamily. Classic translation factor GTPase family. PrfC subfamily.</text>
</comment>